<reference key="1">
    <citation type="journal article" date="2008" name="J. Bacteriol.">
        <title>Complete genome sequence of Neisseria gonorrhoeae NCCP11945.</title>
        <authorList>
            <person name="Chung G.T."/>
            <person name="Yoo J.S."/>
            <person name="Oh H.B."/>
            <person name="Lee Y.S."/>
            <person name="Cha S.H."/>
            <person name="Kim S.J."/>
            <person name="Yoo C.K."/>
        </authorList>
    </citation>
    <scope>NUCLEOTIDE SEQUENCE [LARGE SCALE GENOMIC DNA]</scope>
    <source>
        <strain>NCCP11945</strain>
    </source>
</reference>
<evidence type="ECO:0000255" key="1">
    <source>
        <dbReference type="HAMAP-Rule" id="MF_01014"/>
    </source>
</evidence>
<gene>
    <name evidence="1" type="primary">hisA</name>
    <name type="ordered locus">NGK_0345</name>
</gene>
<comment type="catalytic activity">
    <reaction evidence="1">
        <text>1-(5-phospho-beta-D-ribosyl)-5-[(5-phospho-beta-D-ribosylamino)methylideneamino]imidazole-4-carboxamide = 5-[(5-phospho-1-deoxy-D-ribulos-1-ylimino)methylamino]-1-(5-phospho-beta-D-ribosyl)imidazole-4-carboxamide</text>
        <dbReference type="Rhea" id="RHEA:15469"/>
        <dbReference type="ChEBI" id="CHEBI:58435"/>
        <dbReference type="ChEBI" id="CHEBI:58525"/>
        <dbReference type="EC" id="5.3.1.16"/>
    </reaction>
</comment>
<comment type="pathway">
    <text evidence="1">Amino-acid biosynthesis; L-histidine biosynthesis; L-histidine from 5-phospho-alpha-D-ribose 1-diphosphate: step 4/9.</text>
</comment>
<comment type="subcellular location">
    <subcellularLocation>
        <location evidence="1">Cytoplasm</location>
    </subcellularLocation>
</comment>
<comment type="similarity">
    <text evidence="1">Belongs to the HisA/HisF family.</text>
</comment>
<dbReference type="EC" id="5.3.1.16" evidence="1"/>
<dbReference type="EMBL" id="CP001050">
    <property type="protein sequence ID" value="ACF29038.1"/>
    <property type="molecule type" value="Genomic_DNA"/>
</dbReference>
<dbReference type="RefSeq" id="WP_003704455.1">
    <property type="nucleotide sequence ID" value="NC_011035.1"/>
</dbReference>
<dbReference type="SMR" id="B4RJN4"/>
<dbReference type="KEGG" id="ngk:NGK_0345"/>
<dbReference type="HOGENOM" id="CLU_048577_1_1_4"/>
<dbReference type="UniPathway" id="UPA00031">
    <property type="reaction ID" value="UER00009"/>
</dbReference>
<dbReference type="Proteomes" id="UP000002564">
    <property type="component" value="Chromosome"/>
</dbReference>
<dbReference type="GO" id="GO:0005737">
    <property type="term" value="C:cytoplasm"/>
    <property type="evidence" value="ECO:0007669"/>
    <property type="project" value="UniProtKB-SubCell"/>
</dbReference>
<dbReference type="GO" id="GO:0003949">
    <property type="term" value="F:1-(5-phosphoribosyl)-5-[(5-phosphoribosylamino)methylideneamino]imidazole-4-carboxamide isomerase activity"/>
    <property type="evidence" value="ECO:0007669"/>
    <property type="project" value="UniProtKB-UniRule"/>
</dbReference>
<dbReference type="GO" id="GO:0000105">
    <property type="term" value="P:L-histidine biosynthetic process"/>
    <property type="evidence" value="ECO:0007669"/>
    <property type="project" value="UniProtKB-UniRule"/>
</dbReference>
<dbReference type="GO" id="GO:0000162">
    <property type="term" value="P:L-tryptophan biosynthetic process"/>
    <property type="evidence" value="ECO:0007669"/>
    <property type="project" value="TreeGrafter"/>
</dbReference>
<dbReference type="CDD" id="cd04732">
    <property type="entry name" value="HisA"/>
    <property type="match status" value="1"/>
</dbReference>
<dbReference type="FunFam" id="3.20.20.70:FF:000009">
    <property type="entry name" value="1-(5-phosphoribosyl)-5-[(5-phosphoribosylamino)methylideneamino] imidazole-4-carboxamide isomerase"/>
    <property type="match status" value="1"/>
</dbReference>
<dbReference type="Gene3D" id="3.20.20.70">
    <property type="entry name" value="Aldolase class I"/>
    <property type="match status" value="1"/>
</dbReference>
<dbReference type="HAMAP" id="MF_01014">
    <property type="entry name" value="HisA"/>
    <property type="match status" value="1"/>
</dbReference>
<dbReference type="InterPro" id="IPR013785">
    <property type="entry name" value="Aldolase_TIM"/>
</dbReference>
<dbReference type="InterPro" id="IPR006062">
    <property type="entry name" value="His_biosynth"/>
</dbReference>
<dbReference type="InterPro" id="IPR006063">
    <property type="entry name" value="HisA_bact_arch"/>
</dbReference>
<dbReference type="InterPro" id="IPR044524">
    <property type="entry name" value="Isoase_HisA-like"/>
</dbReference>
<dbReference type="InterPro" id="IPR023016">
    <property type="entry name" value="Isoase_HisA-like_bact"/>
</dbReference>
<dbReference type="InterPro" id="IPR011060">
    <property type="entry name" value="RibuloseP-bd_barrel"/>
</dbReference>
<dbReference type="NCBIfam" id="TIGR00007">
    <property type="entry name" value="1-(5-phosphoribosyl)-5-[(5-phosphoribosylamino)methylideneamino]imidazole-4-carboxamide isomerase"/>
    <property type="match status" value="1"/>
</dbReference>
<dbReference type="PANTHER" id="PTHR43090">
    <property type="entry name" value="1-(5-PHOSPHORIBOSYL)-5-[(5-PHOSPHORIBOSYLAMINO)METHYLIDENEAMINO] IMIDAZOLE-4-CARBOXAMIDE ISOMERASE"/>
    <property type="match status" value="1"/>
</dbReference>
<dbReference type="PANTHER" id="PTHR43090:SF2">
    <property type="entry name" value="1-(5-PHOSPHORIBOSYL)-5-[(5-PHOSPHORIBOSYLAMINO)METHYLIDENEAMINO] IMIDAZOLE-4-CARBOXAMIDE ISOMERASE"/>
    <property type="match status" value="1"/>
</dbReference>
<dbReference type="Pfam" id="PF00977">
    <property type="entry name" value="His_biosynth"/>
    <property type="match status" value="1"/>
</dbReference>
<dbReference type="SUPFAM" id="SSF51366">
    <property type="entry name" value="Ribulose-phoshate binding barrel"/>
    <property type="match status" value="1"/>
</dbReference>
<organism>
    <name type="scientific">Neisseria gonorrhoeae (strain NCCP11945)</name>
    <dbReference type="NCBI Taxonomy" id="521006"/>
    <lineage>
        <taxon>Bacteria</taxon>
        <taxon>Pseudomonadati</taxon>
        <taxon>Pseudomonadota</taxon>
        <taxon>Betaproteobacteria</taxon>
        <taxon>Neisseriales</taxon>
        <taxon>Neisseriaceae</taxon>
        <taxon>Neisseria</taxon>
    </lineage>
</organism>
<proteinExistence type="inferred from homology"/>
<protein>
    <recommendedName>
        <fullName evidence="1">1-(5-phosphoribosyl)-5-[(5-phosphoribosylamino)methylideneamino] imidazole-4-carboxamide isomerase</fullName>
        <ecNumber evidence="1">5.3.1.16</ecNumber>
    </recommendedName>
    <alternativeName>
        <fullName evidence="1">Phosphoribosylformimino-5-aminoimidazole carboxamide ribotide isomerase</fullName>
    </alternativeName>
</protein>
<sequence>MLLIPAIDLKEGRCVRLKQGLMEEATVFSDSPADTALHWFEQGARRLHLVDLNGAFAGVPQNLPAIKDILAAVAKDIPVQLGGGMRDLKTIGQYLDLGLNDVIIGTAAVKNPDLVREACKAFPGRIIVGLDAKDGMAAIDGWATVTGHHVIDLAKRFEDDGVNSIIYTDIGRDGMMSGVNIDATVKLAQSVRIPVIASGGLTGLDDIPALCAAEKHGVAGAITGRAIYEGSIDFAQAQQLADSLD</sequence>
<keyword id="KW-0028">Amino-acid biosynthesis</keyword>
<keyword id="KW-0963">Cytoplasm</keyword>
<keyword id="KW-0368">Histidine biosynthesis</keyword>
<keyword id="KW-0413">Isomerase</keyword>
<name>HIS4_NEIG2</name>
<accession>B4RJN4</accession>
<feature type="chain" id="PRO_1000135132" description="1-(5-phosphoribosyl)-5-[(5-phosphoribosylamino)methylideneamino] imidazole-4-carboxamide isomerase">
    <location>
        <begin position="1"/>
        <end position="245"/>
    </location>
</feature>
<feature type="active site" description="Proton acceptor" evidence="1">
    <location>
        <position position="8"/>
    </location>
</feature>
<feature type="active site" description="Proton donor" evidence="1">
    <location>
        <position position="131"/>
    </location>
</feature>